<feature type="chain" id="PRO_0000088534" description="Photosystem I P700 chlorophyll a apoprotein A1">
    <location>
        <begin position="1"/>
        <end position="750"/>
    </location>
</feature>
<feature type="transmembrane region" description="Helical; Name=I" evidence="1">
    <location>
        <begin position="70"/>
        <end position="93"/>
    </location>
</feature>
<feature type="transmembrane region" description="Helical; Name=II" evidence="1">
    <location>
        <begin position="156"/>
        <end position="179"/>
    </location>
</feature>
<feature type="transmembrane region" description="Helical; Name=III" evidence="1">
    <location>
        <begin position="195"/>
        <end position="219"/>
    </location>
</feature>
<feature type="transmembrane region" description="Helical; Name=IV" evidence="1">
    <location>
        <begin position="291"/>
        <end position="309"/>
    </location>
</feature>
<feature type="transmembrane region" description="Helical; Name=V" evidence="1">
    <location>
        <begin position="346"/>
        <end position="369"/>
    </location>
</feature>
<feature type="transmembrane region" description="Helical; Name=VI" evidence="1">
    <location>
        <begin position="385"/>
        <end position="411"/>
    </location>
</feature>
<feature type="transmembrane region" description="Helical; Name=VII" evidence="1">
    <location>
        <begin position="433"/>
        <end position="455"/>
    </location>
</feature>
<feature type="transmembrane region" description="Helical; Name=VIII" evidence="1">
    <location>
        <begin position="531"/>
        <end position="549"/>
    </location>
</feature>
<feature type="transmembrane region" description="Helical; Name=IX" evidence="1">
    <location>
        <begin position="589"/>
        <end position="610"/>
    </location>
</feature>
<feature type="transmembrane region" description="Helical; Name=X" evidence="1">
    <location>
        <begin position="664"/>
        <end position="686"/>
    </location>
</feature>
<feature type="transmembrane region" description="Helical; Name=XI" evidence="1">
    <location>
        <begin position="724"/>
        <end position="744"/>
    </location>
</feature>
<feature type="binding site" evidence="1">
    <location>
        <position position="573"/>
    </location>
    <ligand>
        <name>[4Fe-4S] cluster</name>
        <dbReference type="ChEBI" id="CHEBI:49883"/>
        <note>ligand shared between dimeric partners</note>
    </ligand>
</feature>
<feature type="binding site" evidence="1">
    <location>
        <position position="582"/>
    </location>
    <ligand>
        <name>[4Fe-4S] cluster</name>
        <dbReference type="ChEBI" id="CHEBI:49883"/>
        <note>ligand shared between dimeric partners</note>
    </ligand>
</feature>
<feature type="binding site" description="axial binding residue" evidence="1">
    <location>
        <position position="675"/>
    </location>
    <ligand>
        <name>chlorophyll a'</name>
        <dbReference type="ChEBI" id="CHEBI:189419"/>
        <label>A1</label>
    </ligand>
    <ligandPart>
        <name>Mg</name>
        <dbReference type="ChEBI" id="CHEBI:25107"/>
    </ligandPart>
</feature>
<feature type="binding site" description="axial binding residue" evidence="1">
    <location>
        <position position="683"/>
    </location>
    <ligand>
        <name>chlorophyll a</name>
        <dbReference type="ChEBI" id="CHEBI:58416"/>
        <label>A3</label>
    </ligand>
    <ligandPart>
        <name>Mg</name>
        <dbReference type="ChEBI" id="CHEBI:25107"/>
    </ligandPart>
</feature>
<feature type="binding site" evidence="1">
    <location>
        <position position="691"/>
    </location>
    <ligand>
        <name>chlorophyll a</name>
        <dbReference type="ChEBI" id="CHEBI:58416"/>
        <label>A3</label>
    </ligand>
</feature>
<feature type="binding site" evidence="1">
    <location>
        <position position="692"/>
    </location>
    <ligand>
        <name>phylloquinone</name>
        <dbReference type="ChEBI" id="CHEBI:18067"/>
        <label>A</label>
    </ligand>
</feature>
<feature type="sequence conflict" description="In Ref. 2; AAB67985." evidence="2" ref="2">
    <original>A</original>
    <variation>G</variation>
    <location>
        <position position="73"/>
    </location>
</feature>
<feature type="sequence conflict" description="In Ref. 2; AAB67985." evidence="2" ref="2">
    <original>D</original>
    <variation>V</variation>
    <location>
        <position position="127"/>
    </location>
</feature>
<feature type="sequence conflict" description="In Ref. 2; AAB67985." evidence="2" ref="2">
    <original>L</original>
    <variation>Y</variation>
    <location>
        <position position="219"/>
    </location>
</feature>
<feature type="sequence conflict" description="In Ref. 2; AAB67985." evidence="2" ref="2">
    <original>A</original>
    <variation>R</variation>
    <location>
        <position position="297"/>
    </location>
</feature>
<feature type="sequence conflict" description="In Ref. 2; AAB67985." evidence="2" ref="2">
    <original>WH</original>
    <variation>LP</variation>
    <location>
        <begin position="346"/>
        <end position="347"/>
    </location>
</feature>
<feature type="strand" evidence="3">
    <location>
        <begin position="14"/>
        <end position="17"/>
    </location>
</feature>
<feature type="helix" evidence="3">
    <location>
        <begin position="24"/>
        <end position="27"/>
    </location>
</feature>
<feature type="turn" evidence="3">
    <location>
        <begin position="29"/>
        <end position="32"/>
    </location>
</feature>
<feature type="turn" evidence="3">
    <location>
        <begin position="34"/>
        <end position="37"/>
    </location>
</feature>
<feature type="helix" evidence="3">
    <location>
        <begin position="44"/>
        <end position="51"/>
    </location>
</feature>
<feature type="turn" evidence="3">
    <location>
        <begin position="52"/>
        <end position="54"/>
    </location>
</feature>
<feature type="helix" evidence="3">
    <location>
        <begin position="56"/>
        <end position="59"/>
    </location>
</feature>
<feature type="helix" evidence="3">
    <location>
        <begin position="63"/>
        <end position="94"/>
    </location>
</feature>
<feature type="helix" evidence="3">
    <location>
        <begin position="98"/>
        <end position="101"/>
    </location>
</feature>
<feature type="turn" evidence="3">
    <location>
        <begin position="105"/>
        <end position="107"/>
    </location>
</feature>
<feature type="strand" evidence="3">
    <location>
        <begin position="111"/>
        <end position="113"/>
    </location>
</feature>
<feature type="strand" evidence="3">
    <location>
        <begin position="118"/>
        <end position="120"/>
    </location>
</feature>
<feature type="helix" evidence="3">
    <location>
        <begin position="121"/>
        <end position="124"/>
    </location>
</feature>
<feature type="strand" evidence="3">
    <location>
        <begin position="129"/>
        <end position="131"/>
    </location>
</feature>
<feature type="strand" evidence="3">
    <location>
        <begin position="133"/>
        <end position="136"/>
    </location>
</feature>
<feature type="helix" evidence="3">
    <location>
        <begin position="141"/>
        <end position="147"/>
    </location>
</feature>
<feature type="helix" evidence="3">
    <location>
        <begin position="153"/>
        <end position="179"/>
    </location>
</feature>
<feature type="strand" evidence="3">
    <location>
        <begin position="181"/>
        <end position="183"/>
    </location>
</feature>
<feature type="helix" evidence="3">
    <location>
        <begin position="185"/>
        <end position="188"/>
    </location>
</feature>
<feature type="helix" evidence="3">
    <location>
        <begin position="191"/>
        <end position="200"/>
    </location>
</feature>
<feature type="turn" evidence="3">
    <location>
        <begin position="201"/>
        <end position="203"/>
    </location>
</feature>
<feature type="helix" evidence="3">
    <location>
        <begin position="204"/>
        <end position="216"/>
    </location>
</feature>
<feature type="helix" evidence="3">
    <location>
        <begin position="218"/>
        <end position="227"/>
    </location>
</feature>
<feature type="helix" evidence="3">
    <location>
        <begin position="231"/>
        <end position="233"/>
    </location>
</feature>
<feature type="helix" evidence="3">
    <location>
        <begin position="239"/>
        <end position="242"/>
    </location>
</feature>
<feature type="helix" evidence="3">
    <location>
        <begin position="244"/>
        <end position="250"/>
    </location>
</feature>
<feature type="helix" evidence="3">
    <location>
        <begin position="252"/>
        <end position="256"/>
    </location>
</feature>
<feature type="helix" evidence="3">
    <location>
        <begin position="259"/>
        <end position="262"/>
    </location>
</feature>
<feature type="helix" evidence="3">
    <location>
        <begin position="266"/>
        <end position="271"/>
    </location>
</feature>
<feature type="turn" evidence="3">
    <location>
        <begin position="281"/>
        <end position="283"/>
    </location>
</feature>
<feature type="strand" evidence="4">
    <location>
        <begin position="284"/>
        <end position="286"/>
    </location>
</feature>
<feature type="helix" evidence="3">
    <location>
        <begin position="288"/>
        <end position="305"/>
    </location>
</feature>
<feature type="helix" evidence="3">
    <location>
        <begin position="319"/>
        <end position="324"/>
    </location>
</feature>
<feature type="turn" evidence="3">
    <location>
        <begin position="329"/>
        <end position="337"/>
    </location>
</feature>
<feature type="helix" evidence="3">
    <location>
        <begin position="338"/>
        <end position="341"/>
    </location>
</feature>
<feature type="turn" evidence="3">
    <location>
        <begin position="342"/>
        <end position="344"/>
    </location>
</feature>
<feature type="helix" evidence="3">
    <location>
        <begin position="346"/>
        <end position="370"/>
    </location>
</feature>
<feature type="helix" evidence="3">
    <location>
        <begin position="381"/>
        <end position="412"/>
    </location>
</feature>
<feature type="turn" evidence="3">
    <location>
        <begin position="416"/>
        <end position="418"/>
    </location>
</feature>
<feature type="helix" evidence="3">
    <location>
        <begin position="422"/>
        <end position="428"/>
    </location>
</feature>
<feature type="helix" evidence="3">
    <location>
        <begin position="431"/>
        <end position="462"/>
    </location>
</feature>
<feature type="helix" evidence="3">
    <location>
        <begin position="465"/>
        <end position="467"/>
    </location>
</feature>
<feature type="strand" evidence="3">
    <location>
        <begin position="468"/>
        <end position="474"/>
    </location>
</feature>
<feature type="helix" evidence="3">
    <location>
        <begin position="479"/>
        <end position="489"/>
    </location>
</feature>
<feature type="turn" evidence="3">
    <location>
        <begin position="493"/>
        <end position="495"/>
    </location>
</feature>
<feature type="helix" evidence="3">
    <location>
        <begin position="505"/>
        <end position="507"/>
    </location>
</feature>
<feature type="strand" evidence="3">
    <location>
        <begin position="513"/>
        <end position="515"/>
    </location>
</feature>
<feature type="strand" evidence="3">
    <location>
        <begin position="518"/>
        <end position="521"/>
    </location>
</feature>
<feature type="helix" evidence="3">
    <location>
        <begin position="528"/>
        <end position="553"/>
    </location>
</feature>
<feature type="helix" evidence="3">
    <location>
        <begin position="564"/>
        <end position="567"/>
    </location>
</feature>
<feature type="helix" evidence="4">
    <location>
        <begin position="577"/>
        <end position="579"/>
    </location>
</feature>
<feature type="helix" evidence="3">
    <location>
        <begin position="586"/>
        <end position="615"/>
    </location>
</feature>
<feature type="strand" evidence="3">
    <location>
        <begin position="618"/>
        <end position="620"/>
    </location>
</feature>
<feature type="strand" evidence="3">
    <location>
        <begin position="626"/>
        <end position="630"/>
    </location>
</feature>
<feature type="helix" evidence="3">
    <location>
        <begin position="634"/>
        <end position="637"/>
    </location>
</feature>
<feature type="helix" evidence="3">
    <location>
        <begin position="641"/>
        <end position="647"/>
    </location>
</feature>
<feature type="helix" evidence="3">
    <location>
        <begin position="649"/>
        <end position="652"/>
    </location>
</feature>
<feature type="helix" evidence="3">
    <location>
        <begin position="654"/>
        <end position="657"/>
    </location>
</feature>
<feature type="helix" evidence="3">
    <location>
        <begin position="665"/>
        <end position="680"/>
    </location>
</feature>
<feature type="helix" evidence="3">
    <location>
        <begin position="682"/>
        <end position="686"/>
    </location>
</feature>
<feature type="helix" evidence="3">
    <location>
        <begin position="689"/>
        <end position="705"/>
    </location>
</feature>
<feature type="strand" evidence="3">
    <location>
        <begin position="711"/>
        <end position="713"/>
    </location>
</feature>
<feature type="helix" evidence="3">
    <location>
        <begin position="719"/>
        <end position="748"/>
    </location>
</feature>
<dbReference type="EC" id="1.97.1.12" evidence="1"/>
<dbReference type="EMBL" id="AP000423">
    <property type="protein sequence ID" value="BAA84385.1"/>
    <property type="molecule type" value="Genomic_DNA"/>
</dbReference>
<dbReference type="EMBL" id="L36246">
    <property type="protein sequence ID" value="AAB67985.1"/>
    <property type="molecule type" value="mRNA"/>
</dbReference>
<dbReference type="PIR" id="S71178">
    <property type="entry name" value="S71178"/>
</dbReference>
<dbReference type="RefSeq" id="NP_051059.1">
    <property type="nucleotide sequence ID" value="NC_000932.1"/>
</dbReference>
<dbReference type="PDB" id="7WFD">
    <property type="method" value="EM"/>
    <property type="resolution" value="3.25 A"/>
    <property type="chains" value="AA=1-750"/>
</dbReference>
<dbReference type="PDB" id="7WFE">
    <property type="method" value="EM"/>
    <property type="resolution" value="3.25 A"/>
    <property type="chains" value="BA=1-750"/>
</dbReference>
<dbReference type="PDB" id="7WG5">
    <property type="method" value="EM"/>
    <property type="resolution" value="3.89 A"/>
    <property type="chains" value="AA/BA=1-750"/>
</dbReference>
<dbReference type="PDB" id="8J6Z">
    <property type="method" value="EM"/>
    <property type="resolution" value="2.79 A"/>
    <property type="chains" value="A=1-750"/>
</dbReference>
<dbReference type="PDB" id="8J7A">
    <property type="method" value="EM"/>
    <property type="resolution" value="3.06 A"/>
    <property type="chains" value="A=1-750"/>
</dbReference>
<dbReference type="PDB" id="8J7B">
    <property type="method" value="EM"/>
    <property type="resolution" value="3.22 A"/>
    <property type="chains" value="A=1-750"/>
</dbReference>
<dbReference type="PDBsum" id="7WFD"/>
<dbReference type="PDBsum" id="7WFE"/>
<dbReference type="PDBsum" id="7WG5"/>
<dbReference type="PDBsum" id="8J6Z"/>
<dbReference type="PDBsum" id="8J7A"/>
<dbReference type="PDBsum" id="8J7B"/>
<dbReference type="EMDB" id="EMD-32462"/>
<dbReference type="EMDB" id="EMD-32463"/>
<dbReference type="EMDB" id="EMD-32477"/>
<dbReference type="EMDB" id="EMD-36021"/>
<dbReference type="EMDB" id="EMD-36036"/>
<dbReference type="EMDB" id="EMD-36037"/>
<dbReference type="SMR" id="P56766"/>
<dbReference type="BioGRID" id="29968">
    <property type="interactions" value="28"/>
</dbReference>
<dbReference type="FunCoup" id="P56766">
    <property type="interactions" value="250"/>
</dbReference>
<dbReference type="IntAct" id="P56766">
    <property type="interactions" value="1"/>
</dbReference>
<dbReference type="STRING" id="3702.P56766"/>
<dbReference type="TCDB" id="5.B.4.1.1">
    <property type="family name" value="the plant photosystem i supercomplex (psi) family"/>
</dbReference>
<dbReference type="iPTMnet" id="P56766"/>
<dbReference type="PaxDb" id="3702-ATCG00350.1"/>
<dbReference type="ProteomicsDB" id="226345"/>
<dbReference type="EnsemblPlants" id="ATCG00350.1">
    <property type="protein sequence ID" value="ATCG00350.1"/>
    <property type="gene ID" value="ATCG00350"/>
</dbReference>
<dbReference type="GeneID" id="844768"/>
<dbReference type="Gramene" id="ATCG00350.1">
    <property type="protein sequence ID" value="ATCG00350.1"/>
    <property type="gene ID" value="ATCG00350"/>
</dbReference>
<dbReference type="KEGG" id="ath:ArthCp022"/>
<dbReference type="Araport" id="ATCG00350"/>
<dbReference type="TAIR" id="ATCG00350">
    <property type="gene designation" value="PSAA"/>
</dbReference>
<dbReference type="eggNOG" id="ENOG502QRYE">
    <property type="taxonomic scope" value="Eukaryota"/>
</dbReference>
<dbReference type="HOGENOM" id="CLU_016126_1_0_1"/>
<dbReference type="InParanoid" id="P56766"/>
<dbReference type="OMA" id="TWAFFHA"/>
<dbReference type="BioCyc" id="MetaCyc:MONOMER-1099"/>
<dbReference type="PRO" id="PR:P56766"/>
<dbReference type="Proteomes" id="UP000006548">
    <property type="component" value="Chloroplast Pltd"/>
</dbReference>
<dbReference type="ExpressionAtlas" id="P56766">
    <property type="expression patterns" value="baseline and differential"/>
</dbReference>
<dbReference type="GO" id="GO:0009507">
    <property type="term" value="C:chloroplast"/>
    <property type="evidence" value="ECO:0007005"/>
    <property type="project" value="TAIR"/>
</dbReference>
<dbReference type="GO" id="GO:0009941">
    <property type="term" value="C:chloroplast envelope"/>
    <property type="evidence" value="ECO:0007005"/>
    <property type="project" value="TAIR"/>
</dbReference>
<dbReference type="GO" id="GO:0009534">
    <property type="term" value="C:chloroplast thylakoid"/>
    <property type="evidence" value="ECO:0007005"/>
    <property type="project" value="TAIR"/>
</dbReference>
<dbReference type="GO" id="GO:0009535">
    <property type="term" value="C:chloroplast thylakoid membrane"/>
    <property type="evidence" value="ECO:0007005"/>
    <property type="project" value="TAIR"/>
</dbReference>
<dbReference type="GO" id="GO:0009522">
    <property type="term" value="C:photosystem I"/>
    <property type="evidence" value="ECO:0007669"/>
    <property type="project" value="UniProtKB-KW"/>
</dbReference>
<dbReference type="GO" id="GO:0009536">
    <property type="term" value="C:plastid"/>
    <property type="evidence" value="ECO:0007005"/>
    <property type="project" value="TAIR"/>
</dbReference>
<dbReference type="GO" id="GO:0010287">
    <property type="term" value="C:plastoglobule"/>
    <property type="evidence" value="ECO:0007005"/>
    <property type="project" value="TAIR"/>
</dbReference>
<dbReference type="GO" id="GO:0009579">
    <property type="term" value="C:thylakoid"/>
    <property type="evidence" value="ECO:0007005"/>
    <property type="project" value="TAIR"/>
</dbReference>
<dbReference type="GO" id="GO:0051539">
    <property type="term" value="F:4 iron, 4 sulfur cluster binding"/>
    <property type="evidence" value="ECO:0007669"/>
    <property type="project" value="UniProtKB-KW"/>
</dbReference>
<dbReference type="GO" id="GO:0016168">
    <property type="term" value="F:chlorophyll binding"/>
    <property type="evidence" value="ECO:0007669"/>
    <property type="project" value="UniProtKB-KW"/>
</dbReference>
<dbReference type="GO" id="GO:0009055">
    <property type="term" value="F:electron transfer activity"/>
    <property type="evidence" value="ECO:0007669"/>
    <property type="project" value="UniProtKB-UniRule"/>
</dbReference>
<dbReference type="GO" id="GO:0000287">
    <property type="term" value="F:magnesium ion binding"/>
    <property type="evidence" value="ECO:0007669"/>
    <property type="project" value="UniProtKB-UniRule"/>
</dbReference>
<dbReference type="GO" id="GO:0003729">
    <property type="term" value="F:mRNA binding"/>
    <property type="evidence" value="ECO:0000314"/>
    <property type="project" value="TAIR"/>
</dbReference>
<dbReference type="GO" id="GO:0016491">
    <property type="term" value="F:oxidoreductase activity"/>
    <property type="evidence" value="ECO:0007669"/>
    <property type="project" value="UniProtKB-KW"/>
</dbReference>
<dbReference type="GO" id="GO:0015979">
    <property type="term" value="P:photosynthesis"/>
    <property type="evidence" value="ECO:0000304"/>
    <property type="project" value="TAIR"/>
</dbReference>
<dbReference type="FunFam" id="1.20.1130.10:FF:000001">
    <property type="entry name" value="Photosystem I P700 chlorophyll a apoprotein A2"/>
    <property type="match status" value="1"/>
</dbReference>
<dbReference type="Gene3D" id="1.20.1130.10">
    <property type="entry name" value="Photosystem I PsaA/PsaB"/>
    <property type="match status" value="1"/>
</dbReference>
<dbReference type="HAMAP" id="MF_00458">
    <property type="entry name" value="PSI_PsaA"/>
    <property type="match status" value="1"/>
</dbReference>
<dbReference type="InterPro" id="IPR006243">
    <property type="entry name" value="PSI_PsaA"/>
</dbReference>
<dbReference type="InterPro" id="IPR001280">
    <property type="entry name" value="PSI_PsaA/B"/>
</dbReference>
<dbReference type="InterPro" id="IPR020586">
    <property type="entry name" value="PSI_PsaA/B_CS"/>
</dbReference>
<dbReference type="InterPro" id="IPR036408">
    <property type="entry name" value="PSI_PsaA/B_sf"/>
</dbReference>
<dbReference type="NCBIfam" id="TIGR01335">
    <property type="entry name" value="psaA"/>
    <property type="match status" value="1"/>
</dbReference>
<dbReference type="PANTHER" id="PTHR30128">
    <property type="entry name" value="OUTER MEMBRANE PROTEIN, OMPA-RELATED"/>
    <property type="match status" value="1"/>
</dbReference>
<dbReference type="PANTHER" id="PTHR30128:SF19">
    <property type="entry name" value="PHOTOSYSTEM I P700 CHLOROPHYLL A APOPROTEIN A1-RELATED"/>
    <property type="match status" value="1"/>
</dbReference>
<dbReference type="Pfam" id="PF00223">
    <property type="entry name" value="PsaA_PsaB"/>
    <property type="match status" value="1"/>
</dbReference>
<dbReference type="PIRSF" id="PIRSF002905">
    <property type="entry name" value="PSI_A"/>
    <property type="match status" value="1"/>
</dbReference>
<dbReference type="PRINTS" id="PR00257">
    <property type="entry name" value="PHOTSYSPSAAB"/>
</dbReference>
<dbReference type="SUPFAM" id="SSF81558">
    <property type="entry name" value="Photosystem I subunits PsaA/PsaB"/>
    <property type="match status" value="1"/>
</dbReference>
<dbReference type="PROSITE" id="PS00419">
    <property type="entry name" value="PHOTOSYSTEM_I_PSAAB"/>
    <property type="match status" value="1"/>
</dbReference>
<sequence>MIIRSPEPEVKILVDRDPIKTSFEEWAKPGHFSRTIAKGPDTTTWIWNLHADAHDFDSHTSDLEEISRKVFSAHFGQLSIIFLWLSGMYFHGARFSNYEAWLSDPTHIGPSAQVVWPIVGQEILNGDVGGGFRGIQITSGFFQIWRASGITSELQLYCTAIGALVFAALMLFAGWFHYHKAAPKLAWFQDVESMLNHHLAGLLGLGSLSWAGHQVHVSLPINQFLNAGVDPKEIPLPHEFILNRDLLAQLYPSFAEGATPFFTLNWSKYSEFLTFRGGLDPVTGGLWLTDIAHHHLAIAILFLIAGHMYRTNWGIGHGIKDILEAHKGPFTGQGHKGLYEILTTSWHAQLSLNLAMLGSLTIIVAHHMYSMPPYPYLATDYATQLSLFTHHMWIGGFLIVGAAAHAAIFMVRDYDPTNRYNDLLDRVLRHRDAIISHLNWVCIFLGFHSFGLYIHNDTMSALGRPQDMFSDTAIQLQPVFAQWIQNTHALAPGVTAPGETASTSLTWGGGELVAVGGKVALLPIPLGTADFLVHHIHAFTIHVTVLILLKGVLFARSSRLIPDKANLGFRFPCDGPGRGGTCQVSAWDHVFLGLFWMYNAISVVIFHFSWKMQSDVWGSISDQGVVTHITGGNFAQSSITINGWLRDFLWAQASQVIQSYGSSLSAYGLFFLGAHFVWAFSLMFLFSGRGYWQELIESIVWAHNKLKVAPATQPRALSIIQGRAVGVTHYLLGGIATTWAFFLARIIAVG</sequence>
<comment type="function">
    <text>PsaA and PsaB bind P700, the primary electron donor of photosystem I (PSI), as well as the electron acceptors A0, A1 and FX. PSI is a plastocyanin-ferredoxin oxidoreductase, converting photonic excitation into a charge separation, which transfers an electron from the donor P700 chlorophyll pair to the spectroscopically characterized acceptors A0, A1, FX, FA and FB in turn. Oxidized P700 is reduced on the lumenal side of the thylakoid membrane by plastocyanin.</text>
</comment>
<comment type="catalytic activity">
    <reaction evidence="1">
        <text>reduced [plastocyanin] + hnu + oxidized [2Fe-2S]-[ferredoxin] = oxidized [plastocyanin] + reduced [2Fe-2S]-[ferredoxin]</text>
        <dbReference type="Rhea" id="RHEA:30407"/>
        <dbReference type="Rhea" id="RHEA-COMP:10000"/>
        <dbReference type="Rhea" id="RHEA-COMP:10001"/>
        <dbReference type="Rhea" id="RHEA-COMP:10039"/>
        <dbReference type="Rhea" id="RHEA-COMP:10040"/>
        <dbReference type="ChEBI" id="CHEBI:29036"/>
        <dbReference type="ChEBI" id="CHEBI:30212"/>
        <dbReference type="ChEBI" id="CHEBI:33737"/>
        <dbReference type="ChEBI" id="CHEBI:33738"/>
        <dbReference type="ChEBI" id="CHEBI:49552"/>
        <dbReference type="EC" id="1.97.1.12"/>
    </reaction>
</comment>
<comment type="cofactor">
    <text evidence="1">P700 is a chlorophyll a/chlorophyll a' dimer, A0 is one or more chlorophyll a, A1 is one or both phylloquinones and FX is a shared 4Fe-4S iron-sulfur center.</text>
</comment>
<comment type="subunit">
    <text evidence="1">The PsaA/B heterodimer binds the P700 chlorophyll special pair and subsequent electron acceptors. PSI consists of a core antenna complex that captures photons, and an electron transfer chain that converts photonic excitation into a charge separation. The eukaryotic PSI reaction center is composed of at least 11 subunits.</text>
</comment>
<comment type="subcellular location">
    <subcellularLocation>
        <location evidence="1">Plastid</location>
        <location evidence="1">Chloroplast thylakoid membrane</location>
        <topology evidence="1">Multi-pass membrane protein</topology>
    </subcellularLocation>
</comment>
<comment type="similarity">
    <text evidence="1">Belongs to the PsaA/PsaB family.</text>
</comment>
<gene>
    <name evidence="1" type="primary">psaA</name>
    <name type="ordered locus">AtCg00350</name>
</gene>
<keyword id="KW-0002">3D-structure</keyword>
<keyword id="KW-0004">4Fe-4S</keyword>
<keyword id="KW-0148">Chlorophyll</keyword>
<keyword id="KW-0150">Chloroplast</keyword>
<keyword id="KW-0157">Chromophore</keyword>
<keyword id="KW-0249">Electron transport</keyword>
<keyword id="KW-0408">Iron</keyword>
<keyword id="KW-0411">Iron-sulfur</keyword>
<keyword id="KW-0460">Magnesium</keyword>
<keyword id="KW-0472">Membrane</keyword>
<keyword id="KW-0479">Metal-binding</keyword>
<keyword id="KW-0560">Oxidoreductase</keyword>
<keyword id="KW-0602">Photosynthesis</keyword>
<keyword id="KW-0603">Photosystem I</keyword>
<keyword id="KW-0934">Plastid</keyword>
<keyword id="KW-1185">Reference proteome</keyword>
<keyword id="KW-0793">Thylakoid</keyword>
<keyword id="KW-0812">Transmembrane</keyword>
<keyword id="KW-1133">Transmembrane helix</keyword>
<keyword id="KW-0813">Transport</keyword>
<name>PSAA_ARATH</name>
<geneLocation type="chloroplast"/>
<protein>
    <recommendedName>
        <fullName evidence="1">Photosystem I P700 chlorophyll a apoprotein A1</fullName>
        <ecNumber evidence="1">1.97.1.12</ecNumber>
    </recommendedName>
    <alternativeName>
        <fullName evidence="1">PSI-A</fullName>
    </alternativeName>
    <alternativeName>
        <fullName evidence="1">PsaA</fullName>
    </alternativeName>
</protein>
<reference key="1">
    <citation type="journal article" date="1999" name="DNA Res.">
        <title>Complete structure of the chloroplast genome of Arabidopsis thaliana.</title>
        <authorList>
            <person name="Sato S."/>
            <person name="Nakamura Y."/>
            <person name="Kaneko T."/>
            <person name="Asamizu E."/>
            <person name="Tabata S."/>
        </authorList>
    </citation>
    <scope>NUCLEOTIDE SEQUENCE [LARGE SCALE GENOMIC DNA]</scope>
    <source>
        <strain>cv. Columbia</strain>
    </source>
</reference>
<reference key="2">
    <citation type="journal article" date="1994" name="Mol. Cells">
        <title>Partial cloning and sequencing of the anaerobiosis-induced gene, psaA1, in Arabidopsis thaliana using reverse transcription-random amplified polymorphic DNA technique.</title>
        <authorList>
            <person name="Min B."/>
            <person name="Kim E."/>
            <person name="Kang Y.H."/>
            <person name="Choi S.-Y."/>
            <person name="Lee S.Y."/>
        </authorList>
    </citation>
    <scope>NUCLEOTIDE SEQUENCE [MRNA] OF 1-347</scope>
    <source>
        <strain>cv. Columbia</strain>
    </source>
</reference>
<accession>P56766</accession>
<accession>Q31852</accession>
<proteinExistence type="evidence at protein level"/>
<organism>
    <name type="scientific">Arabidopsis thaliana</name>
    <name type="common">Mouse-ear cress</name>
    <dbReference type="NCBI Taxonomy" id="3702"/>
    <lineage>
        <taxon>Eukaryota</taxon>
        <taxon>Viridiplantae</taxon>
        <taxon>Streptophyta</taxon>
        <taxon>Embryophyta</taxon>
        <taxon>Tracheophyta</taxon>
        <taxon>Spermatophyta</taxon>
        <taxon>Magnoliopsida</taxon>
        <taxon>eudicotyledons</taxon>
        <taxon>Gunneridae</taxon>
        <taxon>Pentapetalae</taxon>
        <taxon>rosids</taxon>
        <taxon>malvids</taxon>
        <taxon>Brassicales</taxon>
        <taxon>Brassicaceae</taxon>
        <taxon>Camelineae</taxon>
        <taxon>Arabidopsis</taxon>
    </lineage>
</organism>
<evidence type="ECO:0000255" key="1">
    <source>
        <dbReference type="HAMAP-Rule" id="MF_00458"/>
    </source>
</evidence>
<evidence type="ECO:0000305" key="2"/>
<evidence type="ECO:0007829" key="3">
    <source>
        <dbReference type="PDB" id="8J6Z"/>
    </source>
</evidence>
<evidence type="ECO:0007829" key="4">
    <source>
        <dbReference type="PDB" id="8J7A"/>
    </source>
</evidence>